<organism>
    <name type="scientific">Drosophila mojavensis</name>
    <name type="common">Fruit fly</name>
    <dbReference type="NCBI Taxonomy" id="7230"/>
    <lineage>
        <taxon>Eukaryota</taxon>
        <taxon>Metazoa</taxon>
        <taxon>Ecdysozoa</taxon>
        <taxon>Arthropoda</taxon>
        <taxon>Hexapoda</taxon>
        <taxon>Insecta</taxon>
        <taxon>Pterygota</taxon>
        <taxon>Neoptera</taxon>
        <taxon>Endopterygota</taxon>
        <taxon>Diptera</taxon>
        <taxon>Brachycera</taxon>
        <taxon>Muscomorpha</taxon>
        <taxon>Ephydroidea</taxon>
        <taxon>Drosophilidae</taxon>
        <taxon>Drosophila</taxon>
    </lineage>
</organism>
<proteinExistence type="inferred from homology"/>
<reference key="1">
    <citation type="journal article" date="2007" name="Nature">
        <title>Evolution of genes and genomes on the Drosophila phylogeny.</title>
        <authorList>
            <consortium name="Drosophila 12 genomes consortium"/>
        </authorList>
    </citation>
    <scope>NUCLEOTIDE SEQUENCE [LARGE SCALE GENOMIC DNA]</scope>
    <source>
        <strain>Tucson 15081-1352.22</strain>
    </source>
</reference>
<comment type="function">
    <text evidence="1">Required for maturation of ribosomal RNAs and formation of the large ribosomal subunit.</text>
</comment>
<comment type="subcellular location">
    <subcellularLocation>
        <location evidence="1">Nucleus</location>
        <location evidence="1">Nucleolus</location>
    </subcellularLocation>
    <subcellularLocation>
        <location evidence="1">Nucleus</location>
        <location evidence="1">Nucleoplasm</location>
    </subcellularLocation>
</comment>
<comment type="similarity">
    <text evidence="1">Belongs to the WD repeat BOP1/ERB1 family.</text>
</comment>
<accession>B4KQU8</accession>
<gene>
    <name type="ORF">GI19116</name>
</gene>
<dbReference type="EMBL" id="CH933808">
    <property type="protein sequence ID" value="EDW09297.1"/>
    <property type="molecule type" value="Genomic_DNA"/>
</dbReference>
<dbReference type="RefSeq" id="XP_002005362.1">
    <property type="nucleotide sequence ID" value="XM_002005326.2"/>
</dbReference>
<dbReference type="SMR" id="B4KQU8"/>
<dbReference type="FunCoup" id="B4KQU8">
    <property type="interactions" value="1328"/>
</dbReference>
<dbReference type="EnsemblMetazoa" id="FBtr0169841">
    <property type="protein sequence ID" value="FBpp0168333"/>
    <property type="gene ID" value="FBgn0141855"/>
</dbReference>
<dbReference type="GeneID" id="6579466"/>
<dbReference type="KEGG" id="dmo:Dmoj_GI19116"/>
<dbReference type="eggNOG" id="KOG0650">
    <property type="taxonomic scope" value="Eukaryota"/>
</dbReference>
<dbReference type="HOGENOM" id="CLU_011390_0_1_1"/>
<dbReference type="InParanoid" id="B4KQU8"/>
<dbReference type="OMA" id="MRPAKGE"/>
<dbReference type="OrthoDB" id="5571054at2759"/>
<dbReference type="PhylomeDB" id="B4KQU8"/>
<dbReference type="Proteomes" id="UP000009192">
    <property type="component" value="Unassembled WGS sequence"/>
</dbReference>
<dbReference type="GO" id="GO:0005654">
    <property type="term" value="C:nucleoplasm"/>
    <property type="evidence" value="ECO:0007669"/>
    <property type="project" value="UniProtKB-SubCell"/>
</dbReference>
<dbReference type="GO" id="GO:0070545">
    <property type="term" value="C:PeBoW complex"/>
    <property type="evidence" value="ECO:0007669"/>
    <property type="project" value="TreeGrafter"/>
</dbReference>
<dbReference type="GO" id="GO:0030687">
    <property type="term" value="C:preribosome, large subunit precursor"/>
    <property type="evidence" value="ECO:0007669"/>
    <property type="project" value="UniProtKB-UniRule"/>
</dbReference>
<dbReference type="GO" id="GO:0043021">
    <property type="term" value="F:ribonucleoprotein complex binding"/>
    <property type="evidence" value="ECO:0007669"/>
    <property type="project" value="UniProtKB-UniRule"/>
</dbReference>
<dbReference type="GO" id="GO:0000466">
    <property type="term" value="P:maturation of 5.8S rRNA from tricistronic rRNA transcript (SSU-rRNA, 5.8S rRNA, LSU-rRNA)"/>
    <property type="evidence" value="ECO:0007669"/>
    <property type="project" value="UniProtKB-UniRule"/>
</dbReference>
<dbReference type="GO" id="GO:0000463">
    <property type="term" value="P:maturation of LSU-rRNA from tricistronic rRNA transcript (SSU-rRNA, 5.8S rRNA, LSU-rRNA)"/>
    <property type="evidence" value="ECO:0007669"/>
    <property type="project" value="UniProtKB-UniRule"/>
</dbReference>
<dbReference type="GO" id="GO:0035206">
    <property type="term" value="P:regulation of hemocyte proliferation"/>
    <property type="evidence" value="ECO:0007669"/>
    <property type="project" value="EnsemblMetazoa"/>
</dbReference>
<dbReference type="CDD" id="cd00200">
    <property type="entry name" value="WD40"/>
    <property type="match status" value="1"/>
</dbReference>
<dbReference type="FunFam" id="2.130.10.10:FF:000061">
    <property type="entry name" value="Ribosome biogenesis protein BOP1 homolog"/>
    <property type="match status" value="1"/>
</dbReference>
<dbReference type="Gene3D" id="2.130.10.10">
    <property type="entry name" value="YVTN repeat-like/Quinoprotein amine dehydrogenase"/>
    <property type="match status" value="1"/>
</dbReference>
<dbReference type="HAMAP" id="MF_03027">
    <property type="entry name" value="BOP1"/>
    <property type="match status" value="1"/>
</dbReference>
<dbReference type="InterPro" id="IPR028598">
    <property type="entry name" value="BOP1/Erb1"/>
</dbReference>
<dbReference type="InterPro" id="IPR012953">
    <property type="entry name" value="BOP1_N_dom"/>
</dbReference>
<dbReference type="InterPro" id="IPR015943">
    <property type="entry name" value="WD40/YVTN_repeat-like_dom_sf"/>
</dbReference>
<dbReference type="InterPro" id="IPR019775">
    <property type="entry name" value="WD40_repeat_CS"/>
</dbReference>
<dbReference type="InterPro" id="IPR036322">
    <property type="entry name" value="WD40_repeat_dom_sf"/>
</dbReference>
<dbReference type="InterPro" id="IPR001680">
    <property type="entry name" value="WD40_rpt"/>
</dbReference>
<dbReference type="PANTHER" id="PTHR17605:SF0">
    <property type="entry name" value="RIBOSOME BIOGENESIS PROTEIN BOP1"/>
    <property type="match status" value="1"/>
</dbReference>
<dbReference type="PANTHER" id="PTHR17605">
    <property type="entry name" value="RIBOSOME BIOGENESIS PROTEIN BOP1 BLOCK OF PROLIFERATION 1 PROTEIN"/>
    <property type="match status" value="1"/>
</dbReference>
<dbReference type="Pfam" id="PF08145">
    <property type="entry name" value="BOP1NT"/>
    <property type="match status" value="1"/>
</dbReference>
<dbReference type="Pfam" id="PF00400">
    <property type="entry name" value="WD40"/>
    <property type="match status" value="3"/>
</dbReference>
<dbReference type="SMART" id="SM01035">
    <property type="entry name" value="BOP1NT"/>
    <property type="match status" value="1"/>
</dbReference>
<dbReference type="SMART" id="SM00320">
    <property type="entry name" value="WD40"/>
    <property type="match status" value="7"/>
</dbReference>
<dbReference type="SUPFAM" id="SSF50978">
    <property type="entry name" value="WD40 repeat-like"/>
    <property type="match status" value="1"/>
</dbReference>
<dbReference type="PROSITE" id="PS00678">
    <property type="entry name" value="WD_REPEATS_1"/>
    <property type="match status" value="1"/>
</dbReference>
<dbReference type="PROSITE" id="PS50082">
    <property type="entry name" value="WD_REPEATS_2"/>
    <property type="match status" value="1"/>
</dbReference>
<dbReference type="PROSITE" id="PS50294">
    <property type="entry name" value="WD_REPEATS_REGION"/>
    <property type="match status" value="2"/>
</dbReference>
<keyword id="KW-0539">Nucleus</keyword>
<keyword id="KW-1185">Reference proteome</keyword>
<keyword id="KW-0677">Repeat</keyword>
<keyword id="KW-0690">Ribosome biogenesis</keyword>
<keyword id="KW-0698">rRNA processing</keyword>
<keyword id="KW-0853">WD repeat</keyword>
<protein>
    <recommendedName>
        <fullName evidence="1">Ribosome biogenesis protein BOP1 homolog</fullName>
    </recommendedName>
</protein>
<feature type="chain" id="PRO_0000370398" description="Ribosome biogenesis protein BOP1 homolog">
    <location>
        <begin position="1"/>
        <end position="792"/>
    </location>
</feature>
<feature type="repeat" description="WD 1">
    <location>
        <begin position="453"/>
        <end position="494"/>
    </location>
</feature>
<feature type="repeat" description="WD 2">
    <location>
        <begin position="496"/>
        <end position="534"/>
    </location>
</feature>
<feature type="repeat" description="WD 3">
    <location>
        <begin position="578"/>
        <end position="620"/>
    </location>
</feature>
<feature type="repeat" description="WD 4">
    <location>
        <begin position="623"/>
        <end position="661"/>
    </location>
</feature>
<feature type="repeat" description="WD 5">
    <location>
        <begin position="664"/>
        <end position="703"/>
    </location>
</feature>
<feature type="repeat" description="WD 6">
    <location>
        <begin position="707"/>
        <end position="746"/>
    </location>
</feature>
<feature type="repeat" description="WD 7">
    <location>
        <begin position="762"/>
        <end position="792"/>
    </location>
</feature>
<feature type="region of interest" description="Disordered" evidence="2">
    <location>
        <begin position="1"/>
        <end position="167"/>
    </location>
</feature>
<feature type="compositionally biased region" description="Basic residues" evidence="2">
    <location>
        <begin position="1"/>
        <end position="11"/>
    </location>
</feature>
<feature type="compositionally biased region" description="Acidic residues" evidence="2">
    <location>
        <begin position="44"/>
        <end position="53"/>
    </location>
</feature>
<feature type="compositionally biased region" description="Acidic residues" evidence="2">
    <location>
        <begin position="60"/>
        <end position="72"/>
    </location>
</feature>
<feature type="compositionally biased region" description="Acidic residues" evidence="2">
    <location>
        <begin position="82"/>
        <end position="117"/>
    </location>
</feature>
<feature type="compositionally biased region" description="Acidic residues" evidence="2">
    <location>
        <begin position="157"/>
        <end position="166"/>
    </location>
</feature>
<evidence type="ECO:0000255" key="1">
    <source>
        <dbReference type="HAMAP-Rule" id="MF_03027"/>
    </source>
</evidence>
<evidence type="ECO:0000256" key="2">
    <source>
        <dbReference type="SAM" id="MobiDB-lite"/>
    </source>
</evidence>
<sequence>MTKKRTVKRKVKEPEPTKEQPSVSEQSENEEDEDLLQAVKDPGEDTTDDEGIDQEYQSDSSEDLEFESDEEGNYLGRKVSNEAEEGEDDQDEDDDEDEDEGEDEDDDSDDDSEESDANEASATPKDDQPSSSKAAAAQTKEPIIQIIPRDPSKPEYEESDTSDEEDIRNTVGNIPMHWYDEYKHIGYDWDAKKIIKPPKGDQIDDFLRKIEDPNFWRTVKDPMTGQEVLLTDEDIALIKRVNSSRIPNPEHDEYAPWIEWFTSEVEKMPIKNVPDHKRSFLPSVSEKKKVSRMVHALKMGWMKTTEEVEREKQQKRGPKFYMLWETDTGREHMRRIHDPVSAPKRDLPGHAESYNPPPEYLFDEKETKEWLKLKDEPHKRKLHFMPQKYKSLRAVPAYSRYLRERFLRCLDLYLCPRAKRVKLNIDAEYLIPKLPSPRDLQPFPTVESLVYRGHTDLVRSVSVEPKGEYLVSGSDDKTVKIWEIATGRCIRTIETNDVVRCVAWCPNAKLSIIAVATGSRLLLINPKVGDKLLIKKTDDLLAESPNLDIIESERIKTAVQWSNAEPDEQEKGVRVVITHFKPIRQVTWHGRGDYLATVMPEGANRSALIHQLSKRRSQIPFSKSKGLIQCVLFHPVKPCFFVATQHNIRIYDLVKQELIKKLLTNSKWISGMSIHPKGDNLLVSTYDKKMLWFDLDLSTKPYQTMRLHRNAVRSVAFHLRYPLFASGSDDQAVIVSHGMVYNDLLQNPLIVPLKKLQTHEKRDEFGVLDVTWHPVQPWVFSTGADCTIRLYT</sequence>
<name>BOP1_DROMO</name>